<proteinExistence type="evidence at protein level"/>
<gene>
    <name type="ordered locus">At5g59670</name>
    <name type="ORF">MTH12.12</name>
</gene>
<feature type="signal peptide" evidence="2">
    <location>
        <begin position="1"/>
        <end position="22"/>
    </location>
</feature>
<feature type="chain" id="PRO_0000380729" description="Receptor-like protein kinase At5g59670">
    <location>
        <begin position="23"/>
        <end position="868"/>
    </location>
</feature>
<feature type="topological domain" description="Extracellular" evidence="2">
    <location>
        <begin position="23"/>
        <end position="500"/>
    </location>
</feature>
<feature type="transmembrane region" description="Helical" evidence="2">
    <location>
        <begin position="501"/>
        <end position="521"/>
    </location>
</feature>
<feature type="topological domain" description="Cytoplasmic" evidence="2">
    <location>
        <begin position="522"/>
        <end position="868"/>
    </location>
</feature>
<feature type="repeat" description="LRR 1">
    <location>
        <begin position="409"/>
        <end position="432"/>
    </location>
</feature>
<feature type="repeat" description="LRR 2">
    <location>
        <begin position="433"/>
        <end position="459"/>
    </location>
</feature>
<feature type="repeat" description="LRR 3">
    <location>
        <begin position="461"/>
        <end position="481"/>
    </location>
</feature>
<feature type="domain" description="Protein kinase" evidence="3">
    <location>
        <begin position="564"/>
        <end position="834"/>
    </location>
</feature>
<feature type="active site" description="Proton acceptor" evidence="3 4">
    <location>
        <position position="689"/>
    </location>
</feature>
<feature type="binding site" evidence="3">
    <location>
        <begin position="570"/>
        <end position="578"/>
    </location>
    <ligand>
        <name>ATP</name>
        <dbReference type="ChEBI" id="CHEBI:30616"/>
    </ligand>
</feature>
<feature type="binding site" evidence="3">
    <location>
        <position position="592"/>
    </location>
    <ligand>
        <name>ATP</name>
        <dbReference type="ChEBI" id="CHEBI:30616"/>
    </ligand>
</feature>
<feature type="modified residue" description="Phosphothreonine" evidence="1">
    <location>
        <position position="555"/>
    </location>
</feature>
<feature type="modified residue" description="Phosphotyrosine" evidence="1">
    <location>
        <position position="637"/>
    </location>
</feature>
<feature type="modified residue" description="Phosphoserine" evidence="1">
    <location>
        <position position="723"/>
    </location>
</feature>
<feature type="modified residue" description="Phosphothreonine" evidence="1">
    <location>
        <position position="724"/>
    </location>
</feature>
<feature type="modified residue" description="Phosphothreonine" evidence="1">
    <location>
        <position position="729"/>
    </location>
</feature>
<feature type="glycosylation site" description="N-linked (GlcNAc...) asparagine" evidence="2">
    <location>
        <position position="38"/>
    </location>
</feature>
<feature type="glycosylation site" description="N-linked (GlcNAc...) asparagine" evidence="2">
    <location>
        <position position="94"/>
    </location>
</feature>
<feature type="glycosylation site" description="N-linked (GlcNAc...) asparagine" evidence="2">
    <location>
        <position position="141"/>
    </location>
</feature>
<feature type="glycosylation site" description="N-linked (GlcNAc...) asparagine" evidence="2">
    <location>
        <position position="287"/>
    </location>
</feature>
<feature type="glycosylation site" description="N-linked (GlcNAc...) asparagine" evidence="2">
    <location>
        <position position="300"/>
    </location>
</feature>
<feature type="glycosylation site" description="N-linked (GlcNAc...) asparagine" evidence="2">
    <location>
        <position position="372"/>
    </location>
</feature>
<feature type="glycosylation site" description="N-linked (GlcNAc...) asparagine" evidence="2">
    <location>
        <position position="405"/>
    </location>
</feature>
<feature type="glycosylation site" description="N-linked (GlcNAc...) asparagine" evidence="2">
    <location>
        <position position="416"/>
    </location>
</feature>
<feature type="glycosylation site" description="N-linked (GlcNAc...) asparagine" evidence="2">
    <location>
        <position position="423"/>
    </location>
</feature>
<feature type="glycosylation site" description="N-linked (GlcNAc...) asparagine" evidence="2">
    <location>
        <position position="445"/>
    </location>
</feature>
<feature type="glycosylation site" description="N-linked (GlcNAc...) asparagine" evidence="2">
    <location>
        <position position="464"/>
    </location>
</feature>
<feature type="glycosylation site" description="N-linked (GlcNAc...) asparagine" evidence="2">
    <location>
        <position position="471"/>
    </location>
</feature>
<keyword id="KW-0067">ATP-binding</keyword>
<keyword id="KW-1003">Cell membrane</keyword>
<keyword id="KW-0325">Glycoprotein</keyword>
<keyword id="KW-0418">Kinase</keyword>
<keyword id="KW-0433">Leucine-rich repeat</keyword>
<keyword id="KW-0472">Membrane</keyword>
<keyword id="KW-0547">Nucleotide-binding</keyword>
<keyword id="KW-0597">Phosphoprotein</keyword>
<keyword id="KW-0675">Receptor</keyword>
<keyword id="KW-1185">Reference proteome</keyword>
<keyword id="KW-0677">Repeat</keyword>
<keyword id="KW-0723">Serine/threonine-protein kinase</keyword>
<keyword id="KW-0732">Signal</keyword>
<keyword id="KW-0808">Transferase</keyword>
<keyword id="KW-0812">Transmembrane</keyword>
<keyword id="KW-1133">Transmembrane helix</keyword>
<keyword id="KW-0829">Tyrosine-protein kinase</keyword>
<name>RLK0_ARATH</name>
<organism>
    <name type="scientific">Arabidopsis thaliana</name>
    <name type="common">Mouse-ear cress</name>
    <dbReference type="NCBI Taxonomy" id="3702"/>
    <lineage>
        <taxon>Eukaryota</taxon>
        <taxon>Viridiplantae</taxon>
        <taxon>Streptophyta</taxon>
        <taxon>Embryophyta</taxon>
        <taxon>Tracheophyta</taxon>
        <taxon>Spermatophyta</taxon>
        <taxon>Magnoliopsida</taxon>
        <taxon>eudicotyledons</taxon>
        <taxon>Gunneridae</taxon>
        <taxon>Pentapetalae</taxon>
        <taxon>rosids</taxon>
        <taxon>malvids</taxon>
        <taxon>Brassicales</taxon>
        <taxon>Brassicaceae</taxon>
        <taxon>Camelineae</taxon>
        <taxon>Arabidopsis</taxon>
    </lineage>
</organism>
<accession>Q9FN94</accession>
<dbReference type="EC" id="2.7.10.1"/>
<dbReference type="EC" id="2.7.11.1"/>
<dbReference type="EMBL" id="FJ708807">
    <property type="protein sequence ID" value="ACN59398.1"/>
    <property type="molecule type" value="mRNA"/>
</dbReference>
<dbReference type="EMBL" id="AB006705">
    <property type="protein sequence ID" value="BAB09505.1"/>
    <property type="molecule type" value="Genomic_DNA"/>
</dbReference>
<dbReference type="EMBL" id="CP002688">
    <property type="protein sequence ID" value="AED97218.1"/>
    <property type="molecule type" value="Genomic_DNA"/>
</dbReference>
<dbReference type="EMBL" id="CP002688">
    <property type="protein sequence ID" value="ANM68447.1"/>
    <property type="molecule type" value="Genomic_DNA"/>
</dbReference>
<dbReference type="EMBL" id="AY099606">
    <property type="protein sequence ID" value="AAM20457.1"/>
    <property type="molecule type" value="mRNA"/>
</dbReference>
<dbReference type="EMBL" id="BT008803">
    <property type="protein sequence ID" value="AAP68242.1"/>
    <property type="molecule type" value="mRNA"/>
</dbReference>
<dbReference type="RefSeq" id="NP_001318840.1">
    <property type="nucleotide sequence ID" value="NM_001345366.1"/>
</dbReference>
<dbReference type="RefSeq" id="NP_200775.2">
    <property type="nucleotide sequence ID" value="NM_125359.4"/>
</dbReference>
<dbReference type="SMR" id="Q9FN94"/>
<dbReference type="BioGRID" id="21332">
    <property type="interactions" value="38"/>
</dbReference>
<dbReference type="FunCoup" id="Q9FN94">
    <property type="interactions" value="1"/>
</dbReference>
<dbReference type="IntAct" id="Q9FN94">
    <property type="interactions" value="37"/>
</dbReference>
<dbReference type="STRING" id="3702.Q9FN94"/>
<dbReference type="GlyGen" id="Q9FN94">
    <property type="glycosylation" value="13 sites"/>
</dbReference>
<dbReference type="iPTMnet" id="Q9FN94"/>
<dbReference type="PaxDb" id="3702-AT5G59670.1"/>
<dbReference type="ProteomicsDB" id="228090"/>
<dbReference type="EnsemblPlants" id="AT5G59670.1">
    <property type="protein sequence ID" value="AT5G59670.1"/>
    <property type="gene ID" value="AT5G59670"/>
</dbReference>
<dbReference type="EnsemblPlants" id="AT5G59670.2">
    <property type="protein sequence ID" value="AT5G59670.2"/>
    <property type="gene ID" value="AT5G59670"/>
</dbReference>
<dbReference type="GeneID" id="836088"/>
<dbReference type="Gramene" id="AT5G59670.1">
    <property type="protein sequence ID" value="AT5G59670.1"/>
    <property type="gene ID" value="AT5G59670"/>
</dbReference>
<dbReference type="Gramene" id="AT5G59670.2">
    <property type="protein sequence ID" value="AT5G59670.2"/>
    <property type="gene ID" value="AT5G59670"/>
</dbReference>
<dbReference type="KEGG" id="ath:AT5G59670"/>
<dbReference type="Araport" id="AT5G59670"/>
<dbReference type="TAIR" id="AT5G59670"/>
<dbReference type="eggNOG" id="ENOG502QQCZ">
    <property type="taxonomic scope" value="Eukaryota"/>
</dbReference>
<dbReference type="HOGENOM" id="CLU_000288_41_1_1"/>
<dbReference type="InParanoid" id="Q9FN94"/>
<dbReference type="OMA" id="PRTCNGG"/>
<dbReference type="OrthoDB" id="2017114at2759"/>
<dbReference type="PhylomeDB" id="Q9FN94"/>
<dbReference type="PRO" id="PR:Q9FN94"/>
<dbReference type="Proteomes" id="UP000006548">
    <property type="component" value="Chromosome 5"/>
</dbReference>
<dbReference type="ExpressionAtlas" id="Q9FN94">
    <property type="expression patterns" value="baseline and differential"/>
</dbReference>
<dbReference type="GO" id="GO:0005886">
    <property type="term" value="C:plasma membrane"/>
    <property type="evidence" value="ECO:0007669"/>
    <property type="project" value="UniProtKB-SubCell"/>
</dbReference>
<dbReference type="GO" id="GO:0005524">
    <property type="term" value="F:ATP binding"/>
    <property type="evidence" value="ECO:0007669"/>
    <property type="project" value="UniProtKB-KW"/>
</dbReference>
<dbReference type="GO" id="GO:0106310">
    <property type="term" value="F:protein serine kinase activity"/>
    <property type="evidence" value="ECO:0007669"/>
    <property type="project" value="RHEA"/>
</dbReference>
<dbReference type="GO" id="GO:0004674">
    <property type="term" value="F:protein serine/threonine kinase activity"/>
    <property type="evidence" value="ECO:0007669"/>
    <property type="project" value="UniProtKB-KW"/>
</dbReference>
<dbReference type="GO" id="GO:0004714">
    <property type="term" value="F:transmembrane receptor protein tyrosine kinase activity"/>
    <property type="evidence" value="ECO:0007669"/>
    <property type="project" value="UniProtKB-EC"/>
</dbReference>
<dbReference type="CDD" id="cd14066">
    <property type="entry name" value="STKc_IRAK"/>
    <property type="match status" value="1"/>
</dbReference>
<dbReference type="FunFam" id="3.80.10.10:FF:000129">
    <property type="entry name" value="Leucine-rich repeat receptor-like kinase"/>
    <property type="match status" value="1"/>
</dbReference>
<dbReference type="FunFam" id="3.30.200.20:FF:000394">
    <property type="entry name" value="Leucine-rich repeat receptor-like protein kinase"/>
    <property type="match status" value="1"/>
</dbReference>
<dbReference type="FunFam" id="1.10.510.10:FF:000146">
    <property type="entry name" value="LRR receptor-like serine/threonine-protein kinase IOS1"/>
    <property type="match status" value="1"/>
</dbReference>
<dbReference type="Gene3D" id="3.30.200.20">
    <property type="entry name" value="Phosphorylase Kinase, domain 1"/>
    <property type="match status" value="1"/>
</dbReference>
<dbReference type="Gene3D" id="3.80.10.10">
    <property type="entry name" value="Ribonuclease Inhibitor"/>
    <property type="match status" value="1"/>
</dbReference>
<dbReference type="Gene3D" id="1.10.510.10">
    <property type="entry name" value="Transferase(Phosphotransferase) domain 1"/>
    <property type="match status" value="1"/>
</dbReference>
<dbReference type="InterPro" id="IPR011009">
    <property type="entry name" value="Kinase-like_dom_sf"/>
</dbReference>
<dbReference type="InterPro" id="IPR001611">
    <property type="entry name" value="Leu-rich_rpt"/>
</dbReference>
<dbReference type="InterPro" id="IPR032675">
    <property type="entry name" value="LRR_dom_sf"/>
</dbReference>
<dbReference type="InterPro" id="IPR024788">
    <property type="entry name" value="Malectin-like_Carb-bd_dom"/>
</dbReference>
<dbReference type="InterPro" id="IPR000719">
    <property type="entry name" value="Prot_kinase_dom"/>
</dbReference>
<dbReference type="InterPro" id="IPR017441">
    <property type="entry name" value="Protein_kinase_ATP_BS"/>
</dbReference>
<dbReference type="InterPro" id="IPR001245">
    <property type="entry name" value="Ser-Thr/Tyr_kinase_cat_dom"/>
</dbReference>
<dbReference type="InterPro" id="IPR008271">
    <property type="entry name" value="Ser/Thr_kinase_AS"/>
</dbReference>
<dbReference type="PANTHER" id="PTHR45631:SF57">
    <property type="entry name" value="LEUCINE-RICH REPEAT PROTEIN KINASE FAMILY PROTEIN"/>
    <property type="match status" value="1"/>
</dbReference>
<dbReference type="PANTHER" id="PTHR45631">
    <property type="entry name" value="OS07G0107800 PROTEIN-RELATED"/>
    <property type="match status" value="1"/>
</dbReference>
<dbReference type="Pfam" id="PF13855">
    <property type="entry name" value="LRR_8"/>
    <property type="match status" value="1"/>
</dbReference>
<dbReference type="Pfam" id="PF12819">
    <property type="entry name" value="Malectin_like"/>
    <property type="match status" value="1"/>
</dbReference>
<dbReference type="Pfam" id="PF07714">
    <property type="entry name" value="PK_Tyr_Ser-Thr"/>
    <property type="match status" value="1"/>
</dbReference>
<dbReference type="SMART" id="SM00220">
    <property type="entry name" value="S_TKc"/>
    <property type="match status" value="1"/>
</dbReference>
<dbReference type="SUPFAM" id="SSF52058">
    <property type="entry name" value="L domain-like"/>
    <property type="match status" value="1"/>
</dbReference>
<dbReference type="SUPFAM" id="SSF56112">
    <property type="entry name" value="Protein kinase-like (PK-like)"/>
    <property type="match status" value="1"/>
</dbReference>
<dbReference type="PROSITE" id="PS00107">
    <property type="entry name" value="PROTEIN_KINASE_ATP"/>
    <property type="match status" value="1"/>
</dbReference>
<dbReference type="PROSITE" id="PS50011">
    <property type="entry name" value="PROTEIN_KINASE_DOM"/>
    <property type="match status" value="1"/>
</dbReference>
<dbReference type="PROSITE" id="PS00108">
    <property type="entry name" value="PROTEIN_KINASE_ST"/>
    <property type="match status" value="1"/>
</dbReference>
<protein>
    <recommendedName>
        <fullName>Receptor-like protein kinase At5g59670</fullName>
        <ecNumber>2.7.10.1</ecNumber>
        <ecNumber>2.7.11.1</ecNumber>
    </recommendedName>
    <alternativeName>
        <fullName>Leucine-rich repeat receptor-like protein kinase At5g59670</fullName>
    </alternativeName>
</protein>
<sequence length="868" mass="97032">MESSFGLLLALLTLTIIHIVQAQDPQGFISLDCGLPANETSPYTETQTGLLFSSDATFIQSGKTGRVQANQESKFLKPYRTLRYFPEGVRNCYNLSVFKERKYLIAASFLYGNYDGHNIAPVFDLYLGPNLWAKIDLQDVNGTGEEILHIPTSNSLQICLVQTGETTPLISSLELRPMRTGSYTTVSGSLKTYRRLYFKKSGSRLRYSKDVYDRSWFPRFMDEWTQISTALGVINTNIYQPPEDALKNAATPTDASAPLTFKWNSEKLDVQYYFYAHYAEIQDLQANDTREFNILLNGQNLSVTGPEVPDKLSIKTFQSSSPISCNGWACNFQLIRTKRSTLPPLLNALEVYTVIQFPRSETDESDVVAMKNISASYGLSRINWQGDPCFPQQLRWDALDCTNRNISQPPRITSLNLSSSRLNGTIAAAIQSITQLETLDLSYNNLTGEVPEFLGKMKSLSVINLSGNNLNGSIPQALRKKRLKLYLEGNPRLIKPPKKEFPVAIVTLVVFVTVIVVLFLVFRKKMSTIVKGLRLPPRTSMVDVTFSNKKSKRFTYSEVVQVTKNFQRVLGKGGFGMVYHGTVKGSEQVAVKVLSQSSTQGSKEFKAEVDLLLRVHHTNLVSLVGYCCEGDYLALVYEFLPNGDLKQHLSGKGGNSIINWSIRLRIALEAALGLEYLHIGCTPPMVHRDVKTANILLDENFKAKLADFGLSRSFQGEGESQESTTIAGTLGYLDPECYHSGRLGEKSDVYSFGIVLLEMITNQPVINQTSGDSHITQWVGFQMNRGDILEIMDPNLRKDYNINSAWRALELAMSCAYPSSSKRPSMSQVIHELKECIACENTGISKNRSLEYQEMNVSLDTTAVPMAR</sequence>
<reference key="1">
    <citation type="journal article" date="2010" name="BMC Genomics">
        <title>Genome-wide cloning and sequence analysis of leucine-rich repeat receptor-like protein kinase genes in Arabidopsis thaliana.</title>
        <authorList>
            <person name="Gou X."/>
            <person name="He K."/>
            <person name="Yang H."/>
            <person name="Yuan T."/>
            <person name="Lin H."/>
            <person name="Clouse S.D."/>
            <person name="Li J."/>
        </authorList>
    </citation>
    <scope>NUCLEOTIDE SEQUENCE [MRNA]</scope>
    <source>
        <strain>cv. Columbia</strain>
    </source>
</reference>
<reference key="2">
    <citation type="journal article" date="1997" name="DNA Res.">
        <title>Structural analysis of Arabidopsis thaliana chromosome 5. II. Sequence features of the regions of 1,044,062 bp covered by thirteen physically assigned P1 clones.</title>
        <authorList>
            <person name="Kotani H."/>
            <person name="Nakamura Y."/>
            <person name="Sato S."/>
            <person name="Kaneko T."/>
            <person name="Asamizu E."/>
            <person name="Miyajima N."/>
            <person name="Tabata S."/>
        </authorList>
    </citation>
    <scope>NUCLEOTIDE SEQUENCE [LARGE SCALE GENOMIC DNA]</scope>
    <source>
        <strain>cv. Columbia</strain>
    </source>
</reference>
<reference key="3">
    <citation type="journal article" date="2017" name="Plant J.">
        <title>Araport11: a complete reannotation of the Arabidopsis thaliana reference genome.</title>
        <authorList>
            <person name="Cheng C.Y."/>
            <person name="Krishnakumar V."/>
            <person name="Chan A.P."/>
            <person name="Thibaud-Nissen F."/>
            <person name="Schobel S."/>
            <person name="Town C.D."/>
        </authorList>
    </citation>
    <scope>GENOME REANNOTATION</scope>
    <source>
        <strain>cv. Columbia</strain>
    </source>
</reference>
<reference key="4">
    <citation type="journal article" date="2003" name="Science">
        <title>Empirical analysis of transcriptional activity in the Arabidopsis genome.</title>
        <authorList>
            <person name="Yamada K."/>
            <person name="Lim J."/>
            <person name="Dale J.M."/>
            <person name="Chen H."/>
            <person name="Shinn P."/>
            <person name="Palm C.J."/>
            <person name="Southwick A.M."/>
            <person name="Wu H.C."/>
            <person name="Kim C.J."/>
            <person name="Nguyen M."/>
            <person name="Pham P.K."/>
            <person name="Cheuk R.F."/>
            <person name="Karlin-Newmann G."/>
            <person name="Liu S.X."/>
            <person name="Lam B."/>
            <person name="Sakano H."/>
            <person name="Wu T."/>
            <person name="Yu G."/>
            <person name="Miranda M."/>
            <person name="Quach H.L."/>
            <person name="Tripp M."/>
            <person name="Chang C.H."/>
            <person name="Lee J.M."/>
            <person name="Toriumi M.J."/>
            <person name="Chan M.M."/>
            <person name="Tang C.C."/>
            <person name="Onodera C.S."/>
            <person name="Deng J.M."/>
            <person name="Akiyama K."/>
            <person name="Ansari Y."/>
            <person name="Arakawa T."/>
            <person name="Banh J."/>
            <person name="Banno F."/>
            <person name="Bowser L."/>
            <person name="Brooks S.Y."/>
            <person name="Carninci P."/>
            <person name="Chao Q."/>
            <person name="Choy N."/>
            <person name="Enju A."/>
            <person name="Goldsmith A.D."/>
            <person name="Gurjal M."/>
            <person name="Hansen N.F."/>
            <person name="Hayashizaki Y."/>
            <person name="Johnson-Hopson C."/>
            <person name="Hsuan V.W."/>
            <person name="Iida K."/>
            <person name="Karnes M."/>
            <person name="Khan S."/>
            <person name="Koesema E."/>
            <person name="Ishida J."/>
            <person name="Jiang P.X."/>
            <person name="Jones T."/>
            <person name="Kawai J."/>
            <person name="Kamiya A."/>
            <person name="Meyers C."/>
            <person name="Nakajima M."/>
            <person name="Narusaka M."/>
            <person name="Seki M."/>
            <person name="Sakurai T."/>
            <person name="Satou M."/>
            <person name="Tamse R."/>
            <person name="Vaysberg M."/>
            <person name="Wallender E.K."/>
            <person name="Wong C."/>
            <person name="Yamamura Y."/>
            <person name="Yuan S."/>
            <person name="Shinozaki K."/>
            <person name="Davis R.W."/>
            <person name="Theologis A."/>
            <person name="Ecker J.R."/>
        </authorList>
    </citation>
    <scope>NUCLEOTIDE SEQUENCE [LARGE SCALE MRNA]</scope>
    <source>
        <strain>cv. Columbia</strain>
    </source>
</reference>
<reference key="5">
    <citation type="journal article" date="2009" name="Proc. Natl. Acad. Sci. U.S.A.">
        <title>Tyrosine phosphorylation of the BRI1 receptor kinase emerges as a component of brassinosteroid signaling in Arabidopsis.</title>
        <authorList>
            <person name="Oh M.-H."/>
            <person name="Wang X."/>
            <person name="Kota U."/>
            <person name="Goshe M.B."/>
            <person name="Clouse S.D."/>
            <person name="Huber S.C."/>
        </authorList>
    </citation>
    <scope>FUNCTION</scope>
    <scope>AUTOPHOSPHORYLATION</scope>
</reference>
<evidence type="ECO:0000250" key="1">
    <source>
        <dbReference type="UniProtKB" id="O48814"/>
    </source>
</evidence>
<evidence type="ECO:0000255" key="2"/>
<evidence type="ECO:0000255" key="3">
    <source>
        <dbReference type="PROSITE-ProRule" id="PRU00159"/>
    </source>
</evidence>
<evidence type="ECO:0000255" key="4">
    <source>
        <dbReference type="PROSITE-ProRule" id="PRU10027"/>
    </source>
</evidence>
<evidence type="ECO:0000269" key="5">
    <source>
    </source>
</evidence>
<evidence type="ECO:0000305" key="6"/>
<comment type="function">
    <text evidence="5">Probable receptor with a dual specificity kinase activity acting on both serine/threonine- and tyrosine-containing substrates.</text>
</comment>
<comment type="catalytic activity">
    <reaction>
        <text>L-seryl-[protein] + ATP = O-phospho-L-seryl-[protein] + ADP + H(+)</text>
        <dbReference type="Rhea" id="RHEA:17989"/>
        <dbReference type="Rhea" id="RHEA-COMP:9863"/>
        <dbReference type="Rhea" id="RHEA-COMP:11604"/>
        <dbReference type="ChEBI" id="CHEBI:15378"/>
        <dbReference type="ChEBI" id="CHEBI:29999"/>
        <dbReference type="ChEBI" id="CHEBI:30616"/>
        <dbReference type="ChEBI" id="CHEBI:83421"/>
        <dbReference type="ChEBI" id="CHEBI:456216"/>
        <dbReference type="EC" id="2.7.11.1"/>
    </reaction>
</comment>
<comment type="catalytic activity">
    <reaction>
        <text>L-threonyl-[protein] + ATP = O-phospho-L-threonyl-[protein] + ADP + H(+)</text>
        <dbReference type="Rhea" id="RHEA:46608"/>
        <dbReference type="Rhea" id="RHEA-COMP:11060"/>
        <dbReference type="Rhea" id="RHEA-COMP:11605"/>
        <dbReference type="ChEBI" id="CHEBI:15378"/>
        <dbReference type="ChEBI" id="CHEBI:30013"/>
        <dbReference type="ChEBI" id="CHEBI:30616"/>
        <dbReference type="ChEBI" id="CHEBI:61977"/>
        <dbReference type="ChEBI" id="CHEBI:456216"/>
        <dbReference type="EC" id="2.7.11.1"/>
    </reaction>
</comment>
<comment type="catalytic activity">
    <reaction evidence="4">
        <text>L-tyrosyl-[protein] + ATP = O-phospho-L-tyrosyl-[protein] + ADP + H(+)</text>
        <dbReference type="Rhea" id="RHEA:10596"/>
        <dbReference type="Rhea" id="RHEA-COMP:10136"/>
        <dbReference type="Rhea" id="RHEA-COMP:20101"/>
        <dbReference type="ChEBI" id="CHEBI:15378"/>
        <dbReference type="ChEBI" id="CHEBI:30616"/>
        <dbReference type="ChEBI" id="CHEBI:46858"/>
        <dbReference type="ChEBI" id="CHEBI:61978"/>
        <dbReference type="ChEBI" id="CHEBI:456216"/>
        <dbReference type="EC" id="2.7.10.1"/>
    </reaction>
</comment>
<comment type="subcellular location">
    <subcellularLocation>
        <location evidence="6">Cell membrane</location>
        <topology evidence="6">Single-pass type I membrane protein</topology>
    </subcellularLocation>
</comment>
<comment type="PTM">
    <text>Autophosphorylated on Tyr and Thr residues.</text>
</comment>
<comment type="similarity">
    <text evidence="3">Belongs to the protein kinase superfamily. Ser/Thr protein kinase family.</text>
</comment>